<evidence type="ECO:0000255" key="1">
    <source>
        <dbReference type="HAMAP-Rule" id="MF_03189"/>
    </source>
</evidence>
<evidence type="ECO:0000256" key="2">
    <source>
        <dbReference type="SAM" id="MobiDB-lite"/>
    </source>
</evidence>
<dbReference type="EC" id="2.5.1.39" evidence="1"/>
<dbReference type="EMBL" id="AAFI02000040">
    <property type="protein sequence ID" value="EAL66917.1"/>
    <property type="molecule type" value="Genomic_DNA"/>
</dbReference>
<dbReference type="RefSeq" id="XP_640905.1">
    <property type="nucleotide sequence ID" value="XM_635813.1"/>
</dbReference>
<dbReference type="SMR" id="Q54U71"/>
<dbReference type="FunCoup" id="Q54U71">
    <property type="interactions" value="264"/>
</dbReference>
<dbReference type="STRING" id="44689.Q54U71"/>
<dbReference type="PaxDb" id="44689-DDB0231591"/>
<dbReference type="EnsemblProtists" id="EAL66917">
    <property type="protein sequence ID" value="EAL66917"/>
    <property type="gene ID" value="DDB_G0281241"/>
</dbReference>
<dbReference type="GeneID" id="8622964"/>
<dbReference type="KEGG" id="ddi:DDB_G0281241"/>
<dbReference type="dictyBase" id="DDB_G0281241">
    <property type="gene designation" value="coq2"/>
</dbReference>
<dbReference type="VEuPathDB" id="AmoebaDB:DDB_G0281241"/>
<dbReference type="eggNOG" id="KOG1381">
    <property type="taxonomic scope" value="Eukaryota"/>
</dbReference>
<dbReference type="HOGENOM" id="CLU_034879_0_2_1"/>
<dbReference type="InParanoid" id="Q54U71"/>
<dbReference type="OMA" id="TTTPEWI"/>
<dbReference type="PhylomeDB" id="Q54U71"/>
<dbReference type="Reactome" id="R-DDI-1268020">
    <property type="pathway name" value="Mitochondrial protein import"/>
</dbReference>
<dbReference type="Reactome" id="R-DDI-2142789">
    <property type="pathway name" value="Ubiquinol biosynthesis"/>
</dbReference>
<dbReference type="UniPathway" id="UPA00232"/>
<dbReference type="PRO" id="PR:Q54U71"/>
<dbReference type="Proteomes" id="UP000002195">
    <property type="component" value="Chromosome 3"/>
</dbReference>
<dbReference type="GO" id="GO:0005743">
    <property type="term" value="C:mitochondrial inner membrane"/>
    <property type="evidence" value="ECO:0000318"/>
    <property type="project" value="GO_Central"/>
</dbReference>
<dbReference type="GO" id="GO:0031966">
    <property type="term" value="C:mitochondrial membrane"/>
    <property type="evidence" value="ECO:0000250"/>
    <property type="project" value="dictyBase"/>
</dbReference>
<dbReference type="GO" id="GO:0008412">
    <property type="term" value="F:4-hydroxybenzoate polyprenyltransferase activity"/>
    <property type="evidence" value="ECO:0000250"/>
    <property type="project" value="dictyBase"/>
</dbReference>
<dbReference type="GO" id="GO:0016765">
    <property type="term" value="F:transferase activity, transferring alkyl or aryl (other than methyl) groups"/>
    <property type="evidence" value="ECO:0000318"/>
    <property type="project" value="GO_Central"/>
</dbReference>
<dbReference type="GO" id="GO:0008299">
    <property type="term" value="P:isoprenoid biosynthetic process"/>
    <property type="evidence" value="ECO:0007669"/>
    <property type="project" value="UniProtKB-UniRule"/>
</dbReference>
<dbReference type="GO" id="GO:0006744">
    <property type="term" value="P:ubiquinone biosynthetic process"/>
    <property type="evidence" value="ECO:0000250"/>
    <property type="project" value="dictyBase"/>
</dbReference>
<dbReference type="CDD" id="cd13959">
    <property type="entry name" value="PT_UbiA_COQ2"/>
    <property type="match status" value="1"/>
</dbReference>
<dbReference type="FunFam" id="1.20.120.1780:FF:000001">
    <property type="entry name" value="4-hydroxybenzoate octaprenyltransferase"/>
    <property type="match status" value="1"/>
</dbReference>
<dbReference type="FunFam" id="1.10.357.140:FF:000003">
    <property type="entry name" value="4-hydroxybenzoate polyprenyltransferase, mitochondrial"/>
    <property type="match status" value="1"/>
</dbReference>
<dbReference type="Gene3D" id="1.10.357.140">
    <property type="entry name" value="UbiA prenyltransferase"/>
    <property type="match status" value="1"/>
</dbReference>
<dbReference type="Gene3D" id="1.20.120.1780">
    <property type="entry name" value="UbiA prenyltransferase"/>
    <property type="match status" value="1"/>
</dbReference>
<dbReference type="HAMAP" id="MF_01635">
    <property type="entry name" value="UbiA"/>
    <property type="match status" value="1"/>
</dbReference>
<dbReference type="InterPro" id="IPR006370">
    <property type="entry name" value="HB_polyprenyltransferase-like"/>
</dbReference>
<dbReference type="InterPro" id="IPR039653">
    <property type="entry name" value="Prenyltransferase"/>
</dbReference>
<dbReference type="InterPro" id="IPR000537">
    <property type="entry name" value="UbiA_prenyltransferase"/>
</dbReference>
<dbReference type="InterPro" id="IPR030470">
    <property type="entry name" value="UbiA_prenylTrfase_CS"/>
</dbReference>
<dbReference type="InterPro" id="IPR044878">
    <property type="entry name" value="UbiA_sf"/>
</dbReference>
<dbReference type="NCBIfam" id="TIGR01474">
    <property type="entry name" value="ubiA_proteo"/>
    <property type="match status" value="1"/>
</dbReference>
<dbReference type="PANTHER" id="PTHR11048:SF28">
    <property type="entry name" value="4-HYDROXYBENZOATE POLYPRENYLTRANSFERASE, MITOCHONDRIAL"/>
    <property type="match status" value="1"/>
</dbReference>
<dbReference type="PANTHER" id="PTHR11048">
    <property type="entry name" value="PRENYLTRANSFERASES"/>
    <property type="match status" value="1"/>
</dbReference>
<dbReference type="Pfam" id="PF01040">
    <property type="entry name" value="UbiA"/>
    <property type="match status" value="1"/>
</dbReference>
<dbReference type="PROSITE" id="PS00943">
    <property type="entry name" value="UBIA"/>
    <property type="match status" value="1"/>
</dbReference>
<accession>Q54U71</accession>
<comment type="function">
    <text>Catalyzes the prenylation of para-hydroxybenzoate (PHB) with an all-trans polyprenyl group. Mediates the second step in the final reaction sequence of coenzyme Q (CoQ) biosynthesis, which is the condensation of the polyisoprenoid side chain with PHB.</text>
</comment>
<comment type="function">
    <text evidence="1">Catalyzes the prenylation of para-hydroxybenzoate (PHB) with an all-trans polyprenyl group. Mediates the second step in the final reaction sequence of coenzyme Q (CoQ) biosynthesis, which is the condensation of the polyisoprenoid side chain with PHB, generating the first membrane-bound Q intermediate.</text>
</comment>
<comment type="catalytic activity">
    <reaction evidence="1">
        <text>an all-trans-polyprenyl diphosphate + 4-hydroxybenzoate = a 4-hydroxy-3-(all-trans-polyprenyl)benzoate + diphosphate</text>
        <dbReference type="Rhea" id="RHEA:44504"/>
        <dbReference type="Rhea" id="RHEA-COMP:9514"/>
        <dbReference type="Rhea" id="RHEA-COMP:9564"/>
        <dbReference type="ChEBI" id="CHEBI:17879"/>
        <dbReference type="ChEBI" id="CHEBI:33019"/>
        <dbReference type="ChEBI" id="CHEBI:58914"/>
        <dbReference type="ChEBI" id="CHEBI:78396"/>
        <dbReference type="EC" id="2.5.1.39"/>
    </reaction>
</comment>
<comment type="cofactor">
    <cofactor evidence="1">
        <name>Mg(2+)</name>
        <dbReference type="ChEBI" id="CHEBI:18420"/>
    </cofactor>
</comment>
<comment type="pathway">
    <text evidence="1">Cofactor biosynthesis; ubiquinone biosynthesis.</text>
</comment>
<comment type="subcellular location">
    <subcellularLocation>
        <location evidence="1">Mitochondrion inner membrane</location>
        <topology evidence="1">Multi-pass membrane protein</topology>
        <orientation evidence="1">Matrix side</orientation>
    </subcellularLocation>
</comment>
<comment type="miscellaneous">
    <text evidence="1">This protein may be expected to contain an N-terminal transit peptide but none has been predicted.</text>
</comment>
<comment type="similarity">
    <text evidence="1">Belongs to the UbiA prenyltransferase family.</text>
</comment>
<reference key="1">
    <citation type="journal article" date="2005" name="Nature">
        <title>The genome of the social amoeba Dictyostelium discoideum.</title>
        <authorList>
            <person name="Eichinger L."/>
            <person name="Pachebat J.A."/>
            <person name="Gloeckner G."/>
            <person name="Rajandream M.A."/>
            <person name="Sucgang R."/>
            <person name="Berriman M."/>
            <person name="Song J."/>
            <person name="Olsen R."/>
            <person name="Szafranski K."/>
            <person name="Xu Q."/>
            <person name="Tunggal B."/>
            <person name="Kummerfeld S."/>
            <person name="Madera M."/>
            <person name="Konfortov B.A."/>
            <person name="Rivero F."/>
            <person name="Bankier A.T."/>
            <person name="Lehmann R."/>
            <person name="Hamlin N."/>
            <person name="Davies R."/>
            <person name="Gaudet P."/>
            <person name="Fey P."/>
            <person name="Pilcher K."/>
            <person name="Chen G."/>
            <person name="Saunders D."/>
            <person name="Sodergren E.J."/>
            <person name="Davis P."/>
            <person name="Kerhornou A."/>
            <person name="Nie X."/>
            <person name="Hall N."/>
            <person name="Anjard C."/>
            <person name="Hemphill L."/>
            <person name="Bason N."/>
            <person name="Farbrother P."/>
            <person name="Desany B."/>
            <person name="Just E."/>
            <person name="Morio T."/>
            <person name="Rost R."/>
            <person name="Churcher C.M."/>
            <person name="Cooper J."/>
            <person name="Haydock S."/>
            <person name="van Driessche N."/>
            <person name="Cronin A."/>
            <person name="Goodhead I."/>
            <person name="Muzny D.M."/>
            <person name="Mourier T."/>
            <person name="Pain A."/>
            <person name="Lu M."/>
            <person name="Harper D."/>
            <person name="Lindsay R."/>
            <person name="Hauser H."/>
            <person name="James K.D."/>
            <person name="Quiles M."/>
            <person name="Madan Babu M."/>
            <person name="Saito T."/>
            <person name="Buchrieser C."/>
            <person name="Wardroper A."/>
            <person name="Felder M."/>
            <person name="Thangavelu M."/>
            <person name="Johnson D."/>
            <person name="Knights A."/>
            <person name="Loulseged H."/>
            <person name="Mungall K.L."/>
            <person name="Oliver K."/>
            <person name="Price C."/>
            <person name="Quail M.A."/>
            <person name="Urushihara H."/>
            <person name="Hernandez J."/>
            <person name="Rabbinowitsch E."/>
            <person name="Steffen D."/>
            <person name="Sanders M."/>
            <person name="Ma J."/>
            <person name="Kohara Y."/>
            <person name="Sharp S."/>
            <person name="Simmonds M.N."/>
            <person name="Spiegler S."/>
            <person name="Tivey A."/>
            <person name="Sugano S."/>
            <person name="White B."/>
            <person name="Walker D."/>
            <person name="Woodward J.R."/>
            <person name="Winckler T."/>
            <person name="Tanaka Y."/>
            <person name="Shaulsky G."/>
            <person name="Schleicher M."/>
            <person name="Weinstock G.M."/>
            <person name="Rosenthal A."/>
            <person name="Cox E.C."/>
            <person name="Chisholm R.L."/>
            <person name="Gibbs R.A."/>
            <person name="Loomis W.F."/>
            <person name="Platzer M."/>
            <person name="Kay R.R."/>
            <person name="Williams J.G."/>
            <person name="Dear P.H."/>
            <person name="Noegel A.A."/>
            <person name="Barrell B.G."/>
            <person name="Kuspa A."/>
        </authorList>
    </citation>
    <scope>NUCLEOTIDE SEQUENCE [LARGE SCALE GENOMIC DNA]</scope>
    <source>
        <strain>AX4</strain>
    </source>
</reference>
<gene>
    <name evidence="1" type="primary">coq2</name>
    <name type="ORF">DDB_G0281241</name>
</gene>
<feature type="chain" id="PRO_0000328211" description="4-hydroxybenzoate polyprenyltransferase, mitochondrial" evidence="1">
    <location>
        <begin position="1"/>
        <end position="463"/>
    </location>
</feature>
<feature type="transmembrane region" description="Helical" evidence="1">
    <location>
        <begin position="181"/>
        <end position="201"/>
    </location>
</feature>
<feature type="transmembrane region" description="Helical" evidence="1">
    <location>
        <begin position="206"/>
        <end position="226"/>
    </location>
</feature>
<feature type="transmembrane region" description="Helical" evidence="1">
    <location>
        <begin position="257"/>
        <end position="277"/>
    </location>
</feature>
<feature type="transmembrane region" description="Helical" evidence="1">
    <location>
        <begin position="305"/>
        <end position="325"/>
    </location>
</feature>
<feature type="transmembrane region" description="Helical" evidence="1">
    <location>
        <begin position="330"/>
        <end position="350"/>
    </location>
</feature>
<feature type="transmembrane region" description="Helical" evidence="1">
    <location>
        <begin position="375"/>
        <end position="395"/>
    </location>
</feature>
<feature type="transmembrane region" description="Helical" evidence="1">
    <location>
        <begin position="431"/>
        <end position="451"/>
    </location>
</feature>
<feature type="region of interest" description="Disordered" evidence="2">
    <location>
        <begin position="28"/>
        <end position="48"/>
    </location>
</feature>
<feature type="region of interest" description="Disordered" evidence="2">
    <location>
        <begin position="133"/>
        <end position="152"/>
    </location>
</feature>
<feature type="compositionally biased region" description="Low complexity" evidence="2">
    <location>
        <begin position="137"/>
        <end position="150"/>
    </location>
</feature>
<keyword id="KW-0414">Isoprene biosynthesis</keyword>
<keyword id="KW-0472">Membrane</keyword>
<keyword id="KW-0496">Mitochondrion</keyword>
<keyword id="KW-0999">Mitochondrion inner membrane</keyword>
<keyword id="KW-1185">Reference proteome</keyword>
<keyword id="KW-0808">Transferase</keyword>
<keyword id="KW-0812">Transmembrane</keyword>
<keyword id="KW-1133">Transmembrane helix</keyword>
<keyword id="KW-0831">Ubiquinone biosynthesis</keyword>
<name>COQ2_DICDI</name>
<sequence length="463" mass="51925">MIKSILSLQNFKFIKPCTNSSILKYNNNNNTNNNNNNNGINKYNSTFNNNNSNFSNKNLFSSKQYQQQSICNIPILSTISYHNKNNTNINTIINNNNSSNNNLINLNDKFNNLNNKTSPIIFNKNYSTTVSTLLDDNNSNSNNNNNSNNNKPSTTFVNDWISKFPNSVQPYLRLSRVDKPIGVWLLLYPCCWSISLAAPAGSFPDLKTMLVFGIGAYVMRSAGCVINDMADYKFDSKVERTKTRPIASKQLTHKQSLIFLGGQLLASFGLILSSLNYYTIALCASSLPIVVLYPFMKRFTYYPQFVLGLAFNWGALAGYSAIAGSCNWSIVAPLYLAGISWTMVYDTIYAHQDKRDDILVGVKSTALKFAEKSRIILSVFSGLVISGMFLTGIAANMPLFYYLGTAACSSHLIWQLKTVDFNNPSSCLEKFISNKNFGLYFLLIIIVSKLLQDKENENEIQKK</sequence>
<proteinExistence type="inferred from homology"/>
<organism>
    <name type="scientific">Dictyostelium discoideum</name>
    <name type="common">Social amoeba</name>
    <dbReference type="NCBI Taxonomy" id="44689"/>
    <lineage>
        <taxon>Eukaryota</taxon>
        <taxon>Amoebozoa</taxon>
        <taxon>Evosea</taxon>
        <taxon>Eumycetozoa</taxon>
        <taxon>Dictyostelia</taxon>
        <taxon>Dictyosteliales</taxon>
        <taxon>Dictyosteliaceae</taxon>
        <taxon>Dictyostelium</taxon>
    </lineage>
</organism>
<protein>
    <recommendedName>
        <fullName evidence="1">4-hydroxybenzoate polyprenyltransferase, mitochondrial</fullName>
        <shortName evidence="1">4-HB polyprenyltransferase</shortName>
        <ecNumber evidence="1">2.5.1.39</ecNumber>
    </recommendedName>
    <alternativeName>
        <fullName evidence="1">Para-hydroxybenzoate--polyprenyltransferase</fullName>
        <shortName evidence="1">PHB:PPT</shortName>
        <shortName evidence="1">PHB:polyprenyltransferase</shortName>
    </alternativeName>
</protein>